<name>HIS4_AZOSB</name>
<keyword id="KW-0028">Amino-acid biosynthesis</keyword>
<keyword id="KW-0963">Cytoplasm</keyword>
<keyword id="KW-0368">Histidine biosynthesis</keyword>
<keyword id="KW-0413">Isomerase</keyword>
<keyword id="KW-1185">Reference proteome</keyword>
<proteinExistence type="inferred from homology"/>
<evidence type="ECO:0000255" key="1">
    <source>
        <dbReference type="HAMAP-Rule" id="MF_01014"/>
    </source>
</evidence>
<protein>
    <recommendedName>
        <fullName evidence="1">1-(5-phosphoribosyl)-5-[(5-phosphoribosylamino)methylideneamino] imidazole-4-carboxamide isomerase</fullName>
        <ecNumber evidence="1">5.3.1.16</ecNumber>
    </recommendedName>
    <alternativeName>
        <fullName evidence="1">Phosphoribosylformimino-5-aminoimidazole carboxamide ribotide isomerase</fullName>
    </alternativeName>
</protein>
<dbReference type="EC" id="5.3.1.16" evidence="1"/>
<dbReference type="EMBL" id="AM406670">
    <property type="protein sequence ID" value="CAL95961.1"/>
    <property type="molecule type" value="Genomic_DNA"/>
</dbReference>
<dbReference type="RefSeq" id="WP_011767068.1">
    <property type="nucleotide sequence ID" value="NC_008702.1"/>
</dbReference>
<dbReference type="SMR" id="A1KAV5"/>
<dbReference type="STRING" id="62928.azo3345"/>
<dbReference type="KEGG" id="aoa:dqs_3482"/>
<dbReference type="KEGG" id="azo:azo3345"/>
<dbReference type="eggNOG" id="COG0106">
    <property type="taxonomic scope" value="Bacteria"/>
</dbReference>
<dbReference type="HOGENOM" id="CLU_048577_1_1_4"/>
<dbReference type="OrthoDB" id="9807749at2"/>
<dbReference type="UniPathway" id="UPA00031">
    <property type="reaction ID" value="UER00009"/>
</dbReference>
<dbReference type="Proteomes" id="UP000002588">
    <property type="component" value="Chromosome"/>
</dbReference>
<dbReference type="GO" id="GO:0005737">
    <property type="term" value="C:cytoplasm"/>
    <property type="evidence" value="ECO:0007669"/>
    <property type="project" value="UniProtKB-SubCell"/>
</dbReference>
<dbReference type="GO" id="GO:0003949">
    <property type="term" value="F:1-(5-phosphoribosyl)-5-[(5-phosphoribosylamino)methylideneamino]imidazole-4-carboxamide isomerase activity"/>
    <property type="evidence" value="ECO:0007669"/>
    <property type="project" value="UniProtKB-UniRule"/>
</dbReference>
<dbReference type="GO" id="GO:0000105">
    <property type="term" value="P:L-histidine biosynthetic process"/>
    <property type="evidence" value="ECO:0007669"/>
    <property type="project" value="UniProtKB-UniRule"/>
</dbReference>
<dbReference type="GO" id="GO:0000162">
    <property type="term" value="P:L-tryptophan biosynthetic process"/>
    <property type="evidence" value="ECO:0007669"/>
    <property type="project" value="TreeGrafter"/>
</dbReference>
<dbReference type="CDD" id="cd04732">
    <property type="entry name" value="HisA"/>
    <property type="match status" value="1"/>
</dbReference>
<dbReference type="FunFam" id="3.20.20.70:FF:000009">
    <property type="entry name" value="1-(5-phosphoribosyl)-5-[(5-phosphoribosylamino)methylideneamino] imidazole-4-carboxamide isomerase"/>
    <property type="match status" value="1"/>
</dbReference>
<dbReference type="Gene3D" id="3.20.20.70">
    <property type="entry name" value="Aldolase class I"/>
    <property type="match status" value="1"/>
</dbReference>
<dbReference type="HAMAP" id="MF_01014">
    <property type="entry name" value="HisA"/>
    <property type="match status" value="1"/>
</dbReference>
<dbReference type="InterPro" id="IPR013785">
    <property type="entry name" value="Aldolase_TIM"/>
</dbReference>
<dbReference type="InterPro" id="IPR006062">
    <property type="entry name" value="His_biosynth"/>
</dbReference>
<dbReference type="InterPro" id="IPR006063">
    <property type="entry name" value="HisA_bact_arch"/>
</dbReference>
<dbReference type="InterPro" id="IPR044524">
    <property type="entry name" value="Isoase_HisA-like"/>
</dbReference>
<dbReference type="InterPro" id="IPR023016">
    <property type="entry name" value="Isoase_HisA-like_bact"/>
</dbReference>
<dbReference type="InterPro" id="IPR011060">
    <property type="entry name" value="RibuloseP-bd_barrel"/>
</dbReference>
<dbReference type="NCBIfam" id="TIGR00007">
    <property type="entry name" value="1-(5-phosphoribosyl)-5-[(5-phosphoribosylamino)methylideneamino]imidazole-4-carboxamide isomerase"/>
    <property type="match status" value="1"/>
</dbReference>
<dbReference type="NCBIfam" id="NF010112">
    <property type="entry name" value="PRK13585.1"/>
    <property type="match status" value="1"/>
</dbReference>
<dbReference type="PANTHER" id="PTHR43090">
    <property type="entry name" value="1-(5-PHOSPHORIBOSYL)-5-[(5-PHOSPHORIBOSYLAMINO)METHYLIDENEAMINO] IMIDAZOLE-4-CARBOXAMIDE ISOMERASE"/>
    <property type="match status" value="1"/>
</dbReference>
<dbReference type="PANTHER" id="PTHR43090:SF2">
    <property type="entry name" value="1-(5-PHOSPHORIBOSYL)-5-[(5-PHOSPHORIBOSYLAMINO)METHYLIDENEAMINO] IMIDAZOLE-4-CARBOXAMIDE ISOMERASE"/>
    <property type="match status" value="1"/>
</dbReference>
<dbReference type="Pfam" id="PF00977">
    <property type="entry name" value="His_biosynth"/>
    <property type="match status" value="1"/>
</dbReference>
<dbReference type="SUPFAM" id="SSF51366">
    <property type="entry name" value="Ribulose-phoshate binding barrel"/>
    <property type="match status" value="1"/>
</dbReference>
<gene>
    <name evidence="1" type="primary">hisA</name>
    <name type="ordered locus">azo3345</name>
</gene>
<comment type="catalytic activity">
    <reaction evidence="1">
        <text>1-(5-phospho-beta-D-ribosyl)-5-[(5-phospho-beta-D-ribosylamino)methylideneamino]imidazole-4-carboxamide = 5-[(5-phospho-1-deoxy-D-ribulos-1-ylimino)methylamino]-1-(5-phospho-beta-D-ribosyl)imidazole-4-carboxamide</text>
        <dbReference type="Rhea" id="RHEA:15469"/>
        <dbReference type="ChEBI" id="CHEBI:58435"/>
        <dbReference type="ChEBI" id="CHEBI:58525"/>
        <dbReference type="EC" id="5.3.1.16"/>
    </reaction>
</comment>
<comment type="pathway">
    <text evidence="1">Amino-acid biosynthesis; L-histidine biosynthesis; L-histidine from 5-phospho-alpha-D-ribose 1-diphosphate: step 4/9.</text>
</comment>
<comment type="subcellular location">
    <subcellularLocation>
        <location evidence="1">Cytoplasm</location>
    </subcellularLocation>
</comment>
<comment type="similarity">
    <text evidence="1">Belongs to the HisA/HisF family.</text>
</comment>
<organism>
    <name type="scientific">Azoarcus sp. (strain BH72)</name>
    <dbReference type="NCBI Taxonomy" id="418699"/>
    <lineage>
        <taxon>Bacteria</taxon>
        <taxon>Pseudomonadati</taxon>
        <taxon>Pseudomonadota</taxon>
        <taxon>Betaproteobacteria</taxon>
        <taxon>Rhodocyclales</taxon>
        <taxon>Zoogloeaceae</taxon>
        <taxon>Azoarcus</taxon>
    </lineage>
</organism>
<feature type="chain" id="PRO_0000290449" description="1-(5-phosphoribosyl)-5-[(5-phosphoribosylamino)methylideneamino] imidazole-4-carboxamide isomerase">
    <location>
        <begin position="1"/>
        <end position="251"/>
    </location>
</feature>
<feature type="active site" description="Proton acceptor" evidence="1">
    <location>
        <position position="8"/>
    </location>
</feature>
<feature type="active site" description="Proton donor" evidence="1">
    <location>
        <position position="131"/>
    </location>
</feature>
<reference key="1">
    <citation type="journal article" date="2006" name="Nat. Biotechnol.">
        <title>Complete genome of the mutualistic, N2-fixing grass endophyte Azoarcus sp. strain BH72.</title>
        <authorList>
            <person name="Krause A."/>
            <person name="Ramakumar A."/>
            <person name="Bartels D."/>
            <person name="Battistoni F."/>
            <person name="Bekel T."/>
            <person name="Boch J."/>
            <person name="Boehm M."/>
            <person name="Friedrich F."/>
            <person name="Hurek T."/>
            <person name="Krause L."/>
            <person name="Linke B."/>
            <person name="McHardy A.C."/>
            <person name="Sarkar A."/>
            <person name="Schneiker S."/>
            <person name="Syed A.A."/>
            <person name="Thauer R."/>
            <person name="Vorhoelter F.-J."/>
            <person name="Weidner S."/>
            <person name="Puehler A."/>
            <person name="Reinhold-Hurek B."/>
            <person name="Kaiser O."/>
            <person name="Goesmann A."/>
        </authorList>
    </citation>
    <scope>NUCLEOTIDE SEQUENCE [LARGE SCALE GENOMIC DNA]</scope>
    <source>
        <strain>BH72</strain>
    </source>
</reference>
<sequence length="251" mass="26301">MLLIPAIDLKDGQCVRLKQGEMDDATVFSEDPAAMARHWIKQGARRLHLVDLNGAFAGKPKNGGAIRAITDEVGDDIPVQLGGGIRDLDTIEHYLDNGISYVIIGTAAVKNPGFLHDACGAFPGHIIVGLDAKDGKVAVDGWSKMTGHDVVDLAKKFEDYGVEAVIYTDIGRDGMLSGVNIEATVRLARALRIPVIASGGIASLTDIEALCAVEDEGIMGAITGRAIYEGTLDLSAAQSRADALRAPGGAA</sequence>
<accession>A1KAV5</accession>